<accession>P19007</accession>
<accession>Q8MKG3</accession>
<accession>Q9MYU3</accession>
<gene>
    <name type="primary">HP</name>
</gene>
<keyword id="KW-0011">Acute phase</keyword>
<keyword id="KW-0044">Antibiotic</keyword>
<keyword id="KW-0929">Antimicrobial</keyword>
<keyword id="KW-0049">Antioxidant</keyword>
<keyword id="KW-0903">Direct protein sequencing</keyword>
<keyword id="KW-1015">Disulfide bond</keyword>
<keyword id="KW-0325">Glycoprotein</keyword>
<keyword id="KW-0351">Hemoglobin-binding</keyword>
<keyword id="KW-0391">Immunity</keyword>
<keyword id="KW-1185">Reference proteome</keyword>
<keyword id="KW-0964">Secreted</keyword>
<keyword id="KW-0721">Serine protease homolog</keyword>
<keyword id="KW-0732">Signal</keyword>
<keyword id="KW-0768">Sushi</keyword>
<name>HPT_RABIT</name>
<sequence length="347" mass="38869">MRALGAVITLLLWGQLFAADFGNEVTDIADDSCPKPPEIANGYVEHLVRYQCKNYYRLRTEGDGVYALNSEKQWVNKAVGEQLPECEAVCGKPKHPVDQVQRIIGGSLDAKGSFPWQAKMVSRHNLVTGATLISEQWLLTTAKNLFLNHTENATAQDIAPTLTLYLGRRQLVEIEKVVLHPNYSEVDIGLIKLKDKVPVNERVMPICLPSKDYTEVGRVGYVSGWGRNSNFTYTDHLKYVMLPVADQDKCIQHYENSTVPENKIPKNPVGVQPILNEHTFCAGMSKYQEDTCYGDAGSTFAIHDLQQDTWYAAGILSFDKSCTVAEYGVYVKTFNILDWIQKTIASN</sequence>
<dbReference type="EMBL" id="AF372520">
    <property type="protein sequence ID" value="AAM21313.1"/>
    <property type="molecule type" value="mRNA"/>
</dbReference>
<dbReference type="EMBL" id="AJ250102">
    <property type="protein sequence ID" value="CAB96389.1"/>
    <property type="molecule type" value="mRNA"/>
</dbReference>
<dbReference type="PIR" id="A19376">
    <property type="entry name" value="HPRB"/>
</dbReference>
<dbReference type="RefSeq" id="NP_001075579.1">
    <property type="nucleotide sequence ID" value="NM_001082110.1"/>
</dbReference>
<dbReference type="SMR" id="P19007"/>
<dbReference type="FunCoup" id="P19007">
    <property type="interactions" value="77"/>
</dbReference>
<dbReference type="STRING" id="9986.ENSOCUP00000042923"/>
<dbReference type="MEROPS" id="S01.972"/>
<dbReference type="GlyCosmos" id="P19007">
    <property type="glycosylation" value="5 sites, No reported glycans"/>
</dbReference>
<dbReference type="PaxDb" id="9986-ENSOCUP00000007820"/>
<dbReference type="GeneID" id="100008816"/>
<dbReference type="KEGG" id="ocu:100008816"/>
<dbReference type="CTD" id="3240"/>
<dbReference type="eggNOG" id="KOG3627">
    <property type="taxonomic scope" value="Eukaryota"/>
</dbReference>
<dbReference type="InParanoid" id="P19007"/>
<dbReference type="OrthoDB" id="6339452at2759"/>
<dbReference type="Proteomes" id="UP000001811">
    <property type="component" value="Unplaced"/>
</dbReference>
<dbReference type="GO" id="GO:0072562">
    <property type="term" value="C:blood microparticle"/>
    <property type="evidence" value="ECO:0007669"/>
    <property type="project" value="TreeGrafter"/>
</dbReference>
<dbReference type="GO" id="GO:0016209">
    <property type="term" value="F:antioxidant activity"/>
    <property type="evidence" value="ECO:0007669"/>
    <property type="project" value="UniProtKB-KW"/>
</dbReference>
<dbReference type="GO" id="GO:0030492">
    <property type="term" value="F:hemoglobin binding"/>
    <property type="evidence" value="ECO:0007669"/>
    <property type="project" value="UniProtKB-KW"/>
</dbReference>
<dbReference type="GO" id="GO:0006953">
    <property type="term" value="P:acute-phase response"/>
    <property type="evidence" value="ECO:0007669"/>
    <property type="project" value="UniProtKB-KW"/>
</dbReference>
<dbReference type="GO" id="GO:0042742">
    <property type="term" value="P:defense response to bacterium"/>
    <property type="evidence" value="ECO:0007669"/>
    <property type="project" value="UniProtKB-KW"/>
</dbReference>
<dbReference type="GO" id="GO:0002376">
    <property type="term" value="P:immune system process"/>
    <property type="evidence" value="ECO:0007669"/>
    <property type="project" value="UniProtKB-KW"/>
</dbReference>
<dbReference type="CDD" id="cd00033">
    <property type="entry name" value="CCP"/>
    <property type="match status" value="1"/>
</dbReference>
<dbReference type="CDD" id="cd00190">
    <property type="entry name" value="Tryp_SPc"/>
    <property type="match status" value="1"/>
</dbReference>
<dbReference type="FunFam" id="2.10.70.10:FF:000048">
    <property type="entry name" value="Haptoglobin"/>
    <property type="match status" value="1"/>
</dbReference>
<dbReference type="FunFam" id="2.40.10.10:FF:000027">
    <property type="entry name" value="Haptoglobin"/>
    <property type="match status" value="1"/>
</dbReference>
<dbReference type="FunFam" id="2.40.10.10:FF:000031">
    <property type="entry name" value="Haptoglobin"/>
    <property type="match status" value="1"/>
</dbReference>
<dbReference type="Gene3D" id="2.10.70.10">
    <property type="entry name" value="Complement Module, domain 1"/>
    <property type="match status" value="1"/>
</dbReference>
<dbReference type="Gene3D" id="2.40.10.10">
    <property type="entry name" value="Trypsin-like serine proteases"/>
    <property type="match status" value="2"/>
</dbReference>
<dbReference type="InterPro" id="IPR008292">
    <property type="entry name" value="Haptoglobin"/>
</dbReference>
<dbReference type="InterPro" id="IPR009003">
    <property type="entry name" value="Peptidase_S1_PA"/>
</dbReference>
<dbReference type="InterPro" id="IPR043504">
    <property type="entry name" value="Peptidase_S1_PA_chymotrypsin"/>
</dbReference>
<dbReference type="InterPro" id="IPR001314">
    <property type="entry name" value="Peptidase_S1A"/>
</dbReference>
<dbReference type="InterPro" id="IPR035976">
    <property type="entry name" value="Sushi/SCR/CCP_sf"/>
</dbReference>
<dbReference type="InterPro" id="IPR000436">
    <property type="entry name" value="Sushi_SCR_CCP_dom"/>
</dbReference>
<dbReference type="InterPro" id="IPR001254">
    <property type="entry name" value="Trypsin_dom"/>
</dbReference>
<dbReference type="PANTHER" id="PTHR24255">
    <property type="entry name" value="COMPLEMENT COMPONENT 1, S SUBCOMPONENT-RELATED"/>
    <property type="match status" value="1"/>
</dbReference>
<dbReference type="PANTHER" id="PTHR24255:SF27">
    <property type="entry name" value="HAPTOGLOBIN-RELATED PROTEIN"/>
    <property type="match status" value="1"/>
</dbReference>
<dbReference type="Pfam" id="PF00089">
    <property type="entry name" value="Trypsin"/>
    <property type="match status" value="1"/>
</dbReference>
<dbReference type="PIRSF" id="PIRSF001137">
    <property type="entry name" value="Haptoglobin"/>
    <property type="match status" value="1"/>
</dbReference>
<dbReference type="PRINTS" id="PR00722">
    <property type="entry name" value="CHYMOTRYPSIN"/>
</dbReference>
<dbReference type="SMART" id="SM00020">
    <property type="entry name" value="Tryp_SPc"/>
    <property type="match status" value="1"/>
</dbReference>
<dbReference type="SUPFAM" id="SSF57535">
    <property type="entry name" value="Complement control module/SCR domain"/>
    <property type="match status" value="1"/>
</dbReference>
<dbReference type="SUPFAM" id="SSF50494">
    <property type="entry name" value="Trypsin-like serine proteases"/>
    <property type="match status" value="1"/>
</dbReference>
<dbReference type="PROSITE" id="PS50923">
    <property type="entry name" value="SUSHI"/>
    <property type="match status" value="1"/>
</dbReference>
<dbReference type="PROSITE" id="PS50240">
    <property type="entry name" value="TRYPSIN_DOM"/>
    <property type="match status" value="1"/>
</dbReference>
<evidence type="ECO:0000250" key="1"/>
<evidence type="ECO:0000250" key="2">
    <source>
        <dbReference type="UniProtKB" id="P00738"/>
    </source>
</evidence>
<evidence type="ECO:0000250" key="3">
    <source>
        <dbReference type="UniProtKB" id="Q8SPS7"/>
    </source>
</evidence>
<evidence type="ECO:0000255" key="4"/>
<evidence type="ECO:0000255" key="5">
    <source>
        <dbReference type="PROSITE-ProRule" id="PRU00274"/>
    </source>
</evidence>
<evidence type="ECO:0000255" key="6">
    <source>
        <dbReference type="PROSITE-ProRule" id="PRU00302"/>
    </source>
</evidence>
<evidence type="ECO:0000269" key="7">
    <source>
    </source>
</evidence>
<evidence type="ECO:0000305" key="8"/>
<feature type="signal peptide" evidence="7">
    <location>
        <begin position="1"/>
        <end position="18"/>
    </location>
</feature>
<feature type="chain" id="PRO_0000028480" description="Haptoglobin">
    <location>
        <begin position="19"/>
        <end position="347"/>
    </location>
</feature>
<feature type="chain" id="PRO_0000028481" description="Haptoglobin alpha chain">
    <location>
        <begin position="19"/>
        <end position="101"/>
    </location>
</feature>
<feature type="chain" id="PRO_0000028482" description="Haptoglobin beta chain">
    <location>
        <begin position="103"/>
        <end position="347"/>
    </location>
</feature>
<feature type="domain" description="Sushi" evidence="6">
    <location>
        <begin position="31"/>
        <end position="88"/>
    </location>
</feature>
<feature type="domain" description="Peptidase S1" evidence="5">
    <location>
        <begin position="103"/>
        <end position="345"/>
    </location>
</feature>
<feature type="region of interest" description="Interaction with CD163" evidence="1">
    <location>
        <begin position="259"/>
        <end position="264"/>
    </location>
</feature>
<feature type="glycosylation site" description="N-linked (GlcNAc...) asparagine" evidence="4">
    <location>
        <position position="148"/>
    </location>
</feature>
<feature type="glycosylation site" description="N-linked (GlcNAc...) asparagine" evidence="4">
    <location>
        <position position="152"/>
    </location>
</feature>
<feature type="glycosylation site" description="N-linked (GlcNAc...) asparagine" evidence="4">
    <location>
        <position position="182"/>
    </location>
</feature>
<feature type="glycosylation site" description="N-linked (GlcNAc...) asparagine" evidence="4">
    <location>
        <position position="230"/>
    </location>
</feature>
<feature type="glycosylation site" description="N-linked (GlcNAc...) asparagine" evidence="4">
    <location>
        <position position="256"/>
    </location>
</feature>
<feature type="disulfide bond" description="Interchain" evidence="1">
    <location>
        <position position="33"/>
    </location>
</feature>
<feature type="disulfide bond" evidence="1">
    <location>
        <begin position="52"/>
        <end position="86"/>
    </location>
</feature>
<feature type="disulfide bond" description="Interchain (between alpha and beta chains)" evidence="5 6">
    <location>
        <begin position="90"/>
        <end position="207"/>
    </location>
</feature>
<feature type="disulfide bond" evidence="1">
    <location>
        <begin position="250"/>
        <end position="281"/>
    </location>
</feature>
<feature type="disulfide bond" evidence="1">
    <location>
        <begin position="292"/>
        <end position="322"/>
    </location>
</feature>
<feature type="sequence conflict" description="In Ref. 2; CAB96389." evidence="8" ref="2">
    <original>D</original>
    <variation>G</variation>
    <location>
        <position position="63"/>
    </location>
</feature>
<feature type="sequence conflict" description="In Ref. 2; CAB96389." evidence="8" ref="2">
    <original>DQ</original>
    <variation>VK</variation>
    <location>
        <begin position="98"/>
        <end position="99"/>
    </location>
</feature>
<proteinExistence type="evidence at protein level"/>
<reference key="1">
    <citation type="submission" date="2001-04" db="EMBL/GenBank/DDBJ databases">
        <title>Haptoglobin expression in rabbit reproductive tracts and embryos during preimplantation periods.</title>
        <authorList>
            <person name="Herrler A."/>
            <person name="Muller-Schottle F."/>
            <person name="Krusche C.A."/>
            <person name="Beier H.M."/>
        </authorList>
    </citation>
    <scope>NUCLEOTIDE SEQUENCE [MRNA]</scope>
</reference>
<reference key="2">
    <citation type="journal article" date="2002" name="FASEB J.">
        <title>Acute-phase protein haptoglobin is a cell migration factor involved in arterial restructuring.</title>
        <authorList>
            <person name="de Kleijn D.P.V."/>
            <person name="Smeets M.B."/>
            <person name="Kemmeren P.P."/>
            <person name="Lim S.K."/>
            <person name="Van Middelaar B.J."/>
            <person name="Velema E."/>
            <person name="Schoneveld A."/>
            <person name="Pasterkamp G."/>
            <person name="Borst C."/>
        </authorList>
    </citation>
    <scope>NUCLEOTIDE SEQUENCE [MRNA] OF 1-197</scope>
    <source>
        <tissue>Femoral artery</tissue>
    </source>
</reference>
<reference key="3">
    <citation type="journal article" date="1983" name="FEBS Lett.">
        <title>Biosynthesis of rabbit haptoglobin: chemical evidence for a single chain precursor.</title>
        <authorList>
            <person name="Chow V."/>
            <person name="Murray R.K."/>
            <person name="Dixon J.D."/>
            <person name="Kurosky A."/>
        </authorList>
    </citation>
    <scope>NUCLEOTIDE SEQUENCE [MRNA] OF 1-33</scope>
    <scope>SIGNAL SEQUENCE CLEAVAGE SITE</scope>
</reference>
<reference key="4">
    <citation type="journal article" date="1976" name="Comp. Biochem. Physiol.">
        <title>Comparative sequence analysis of the N-terminal region of rat, rabbit, and dog haptoglobin beta-chains.</title>
        <authorList>
            <person name="Kurosky A."/>
            <person name="Kim H.H."/>
            <person name="Touchstone B."/>
        </authorList>
    </citation>
    <scope>PROTEIN SEQUENCE OF 103-142</scope>
</reference>
<protein>
    <recommendedName>
        <fullName>Haptoglobin</fullName>
    </recommendedName>
    <component>
        <recommendedName>
            <fullName>Haptoglobin alpha chain</fullName>
        </recommendedName>
    </component>
    <component>
        <recommendedName>
            <fullName>Haptoglobin beta chain</fullName>
        </recommendedName>
    </component>
</protein>
<organism>
    <name type="scientific">Oryctolagus cuniculus</name>
    <name type="common">Rabbit</name>
    <dbReference type="NCBI Taxonomy" id="9986"/>
    <lineage>
        <taxon>Eukaryota</taxon>
        <taxon>Metazoa</taxon>
        <taxon>Chordata</taxon>
        <taxon>Craniata</taxon>
        <taxon>Vertebrata</taxon>
        <taxon>Euteleostomi</taxon>
        <taxon>Mammalia</taxon>
        <taxon>Eutheria</taxon>
        <taxon>Euarchontoglires</taxon>
        <taxon>Glires</taxon>
        <taxon>Lagomorpha</taxon>
        <taxon>Leporidae</taxon>
        <taxon>Oryctolagus</taxon>
    </lineage>
</organism>
<comment type="function">
    <text evidence="1">As a result of hemolysis, hemoglobin is found to accumulate in the kidney and is secreted in the urine. Haptoglobin captures, and combines with free plasma hemoglobin to allow hepatic recycling of heme iron and to prevent kidney damage. Haptoglobin also acts as an antioxidant, has antibacterial activity and plays a role in modulating many aspects of the acute phase response. Hemoglobin/haptoglobin complexes are rapidly cleared by the macrophage CD163 scavenger receptor expressed on the surface of liver Kupfer cells through an endocytic lysosomal degradation pathway (By similarity).</text>
</comment>
<comment type="subunit">
    <text evidence="2 3">Tetramer of two alpha and two beta chains; disulfide-linked (By similarity). The hemoglobin/haptoglobin complex is composed of a haptoglobin dimer bound to two hemoglobin alpha-beta dimers (By similarity). Interacts with CD163 (By similarity). Interacts with ERGIC3 (By similarity).</text>
</comment>
<comment type="subcellular location">
    <subcellularLocation>
        <location>Secreted</location>
    </subcellularLocation>
</comment>
<comment type="tissue specificity">
    <text>Expressed by the liver and secreted in plasma.</text>
</comment>
<comment type="domain">
    <text evidence="1">The beta chain mediates most of the interactions with both subunits of hemoglobin, while the alpha chain forms the homodimeric interface.</text>
</comment>
<comment type="similarity">
    <text evidence="5">Belongs to the peptidase S1 family.</text>
</comment>
<comment type="caution">
    <text evidence="8">Although homologous to serine proteases, it has lost all essential catalytic residues and has no enzymatic activity.</text>
</comment>